<dbReference type="EMBL" id="M32455">
    <property type="protein sequence ID" value="AAA49645.1"/>
    <property type="molecule type" value="mRNA"/>
</dbReference>
<dbReference type="PIR" id="D25929">
    <property type="entry name" value="D25929"/>
</dbReference>
<dbReference type="SMR" id="P07431"/>
<dbReference type="GO" id="GO:0072562">
    <property type="term" value="C:blood microparticle"/>
    <property type="evidence" value="ECO:0007669"/>
    <property type="project" value="TreeGrafter"/>
</dbReference>
<dbReference type="GO" id="GO:0031838">
    <property type="term" value="C:haptoglobin-hemoglobin complex"/>
    <property type="evidence" value="ECO:0007669"/>
    <property type="project" value="TreeGrafter"/>
</dbReference>
<dbReference type="GO" id="GO:0005833">
    <property type="term" value="C:hemoglobin complex"/>
    <property type="evidence" value="ECO:0007669"/>
    <property type="project" value="InterPro"/>
</dbReference>
<dbReference type="GO" id="GO:0031720">
    <property type="term" value="F:haptoglobin binding"/>
    <property type="evidence" value="ECO:0007669"/>
    <property type="project" value="TreeGrafter"/>
</dbReference>
<dbReference type="GO" id="GO:0020037">
    <property type="term" value="F:heme binding"/>
    <property type="evidence" value="ECO:0007669"/>
    <property type="project" value="InterPro"/>
</dbReference>
<dbReference type="GO" id="GO:0046872">
    <property type="term" value="F:metal ion binding"/>
    <property type="evidence" value="ECO:0007669"/>
    <property type="project" value="UniProtKB-KW"/>
</dbReference>
<dbReference type="GO" id="GO:0043177">
    <property type="term" value="F:organic acid binding"/>
    <property type="evidence" value="ECO:0007669"/>
    <property type="project" value="TreeGrafter"/>
</dbReference>
<dbReference type="GO" id="GO:0019825">
    <property type="term" value="F:oxygen binding"/>
    <property type="evidence" value="ECO:0007669"/>
    <property type="project" value="InterPro"/>
</dbReference>
<dbReference type="GO" id="GO:0005344">
    <property type="term" value="F:oxygen carrier activity"/>
    <property type="evidence" value="ECO:0007669"/>
    <property type="project" value="UniProtKB-KW"/>
</dbReference>
<dbReference type="GO" id="GO:0004601">
    <property type="term" value="F:peroxidase activity"/>
    <property type="evidence" value="ECO:0007669"/>
    <property type="project" value="TreeGrafter"/>
</dbReference>
<dbReference type="GO" id="GO:0042744">
    <property type="term" value="P:hydrogen peroxide catabolic process"/>
    <property type="evidence" value="ECO:0007669"/>
    <property type="project" value="TreeGrafter"/>
</dbReference>
<dbReference type="CDD" id="cd08927">
    <property type="entry name" value="Hb-alpha-like"/>
    <property type="match status" value="1"/>
</dbReference>
<dbReference type="FunFam" id="1.10.490.10:FF:000002">
    <property type="entry name" value="Hemoglobin subunit alpha"/>
    <property type="match status" value="1"/>
</dbReference>
<dbReference type="Gene3D" id="1.10.490.10">
    <property type="entry name" value="Globins"/>
    <property type="match status" value="1"/>
</dbReference>
<dbReference type="InterPro" id="IPR000971">
    <property type="entry name" value="Globin"/>
</dbReference>
<dbReference type="InterPro" id="IPR009050">
    <property type="entry name" value="Globin-like_sf"/>
</dbReference>
<dbReference type="InterPro" id="IPR012292">
    <property type="entry name" value="Globin/Proto"/>
</dbReference>
<dbReference type="InterPro" id="IPR002338">
    <property type="entry name" value="Hemoglobin_a-typ"/>
</dbReference>
<dbReference type="InterPro" id="IPR050056">
    <property type="entry name" value="Hemoglobin_oxygen_transport"/>
</dbReference>
<dbReference type="PANTHER" id="PTHR11442">
    <property type="entry name" value="HEMOGLOBIN FAMILY MEMBER"/>
    <property type="match status" value="1"/>
</dbReference>
<dbReference type="PANTHER" id="PTHR11442:SF48">
    <property type="entry name" value="HEMOGLOBIN SUBUNIT ALPHA"/>
    <property type="match status" value="1"/>
</dbReference>
<dbReference type="Pfam" id="PF00042">
    <property type="entry name" value="Globin"/>
    <property type="match status" value="1"/>
</dbReference>
<dbReference type="PRINTS" id="PR00612">
    <property type="entry name" value="ALPHAHAEM"/>
</dbReference>
<dbReference type="SUPFAM" id="SSF46458">
    <property type="entry name" value="Globin-like"/>
    <property type="match status" value="1"/>
</dbReference>
<dbReference type="PROSITE" id="PS01033">
    <property type="entry name" value="GLOBIN"/>
    <property type="match status" value="1"/>
</dbReference>
<sequence length="142" mass="15873">MLLTADDKKHIKAILPSIAAHGDKFGGEALYRMFLINPKTKTYFPNFDFHHNSKQISAHGKKVVDALNEAANHLDNIAGSMSKLSDLHAYDLRVDPGNFPLLAHNILVTVAMYFPQQFDPHTHKALDKFLASVSSVLTSKYR</sequence>
<feature type="initiator methionine" description="Removed">
    <location>
        <position position="1"/>
    </location>
</feature>
<feature type="chain" id="PRO_0000052806" description="Hemoglobin subunit alpha-2">
    <location>
        <begin position="2"/>
        <end position="142"/>
    </location>
</feature>
<feature type="domain" description="Globin" evidence="1">
    <location>
        <begin position="2"/>
        <end position="142"/>
    </location>
</feature>
<feature type="binding site" evidence="1">
    <location>
        <position position="59"/>
    </location>
    <ligand>
        <name>O2</name>
        <dbReference type="ChEBI" id="CHEBI:15379"/>
    </ligand>
</feature>
<feature type="binding site" description="proximal binding residue" evidence="1">
    <location>
        <position position="88"/>
    </location>
    <ligand>
        <name>heme b</name>
        <dbReference type="ChEBI" id="CHEBI:60344"/>
    </ligand>
    <ligandPart>
        <name>Fe</name>
        <dbReference type="ChEBI" id="CHEBI:18248"/>
    </ligandPart>
</feature>
<comment type="function">
    <text>Involved in oxygen transport from the lung to the various peripheral tissues.</text>
</comment>
<comment type="subunit">
    <text>Heterotetramer of two alpha chains and two beta chains.</text>
</comment>
<comment type="tissue specificity">
    <text>Red blood cells.</text>
</comment>
<comment type="similarity">
    <text evidence="1">Belongs to the globin family.</text>
</comment>
<proteinExistence type="evidence at transcript level"/>
<reference key="1">
    <citation type="journal article" date="1986" name="J. Mol. Evol.">
        <title>Globin evolution in the genus Xenopus: comparative analysis of cDNAs coding for adult globin polypeptides of Xenopus borealis and Xenopus tropicalis.</title>
        <authorList>
            <person name="Knoechel W."/>
            <person name="Korge E."/>
            <person name="Basner A."/>
            <person name="Meyerhof W."/>
        </authorList>
    </citation>
    <scope>NUCLEOTIDE SEQUENCE [MRNA]</scope>
</reference>
<organism>
    <name type="scientific">Xenopus borealis</name>
    <name type="common">Kenyan clawed frog</name>
    <dbReference type="NCBI Taxonomy" id="8354"/>
    <lineage>
        <taxon>Eukaryota</taxon>
        <taxon>Metazoa</taxon>
        <taxon>Chordata</taxon>
        <taxon>Craniata</taxon>
        <taxon>Vertebrata</taxon>
        <taxon>Euteleostomi</taxon>
        <taxon>Amphibia</taxon>
        <taxon>Batrachia</taxon>
        <taxon>Anura</taxon>
        <taxon>Pipoidea</taxon>
        <taxon>Pipidae</taxon>
        <taxon>Xenopodinae</taxon>
        <taxon>Xenopus</taxon>
        <taxon>Xenopus</taxon>
    </lineage>
</organism>
<name>HBA2_XENBO</name>
<evidence type="ECO:0000255" key="1">
    <source>
        <dbReference type="PROSITE-ProRule" id="PRU00238"/>
    </source>
</evidence>
<accession>P07431</accession>
<keyword id="KW-0349">Heme</keyword>
<keyword id="KW-0408">Iron</keyword>
<keyword id="KW-0479">Metal-binding</keyword>
<keyword id="KW-0561">Oxygen transport</keyword>
<keyword id="KW-0813">Transport</keyword>
<gene>
    <name type="primary">hba2</name>
</gene>
<protein>
    <recommendedName>
        <fullName>Hemoglobin subunit alpha-2</fullName>
    </recommendedName>
    <alternativeName>
        <fullName>Alpha-2-globin</fullName>
    </alternativeName>
    <alternativeName>
        <fullName>Hemoglobin alpha-2 chain</fullName>
    </alternativeName>
    <alternativeName>
        <fullName>Hemoglobin alpha-minor chain</fullName>
    </alternativeName>
</protein>